<dbReference type="EMBL" id="AY158203">
    <property type="protein sequence ID" value="AAO17776.1"/>
    <property type="molecule type" value="mRNA"/>
</dbReference>
<dbReference type="SMR" id="Q875L2"/>
<dbReference type="OMA" id="WVPRSVN"/>
<dbReference type="GO" id="GO:0005737">
    <property type="term" value="C:cytoplasm"/>
    <property type="evidence" value="ECO:0007669"/>
    <property type="project" value="UniProtKB-KW"/>
</dbReference>
<dbReference type="GO" id="GO:0005874">
    <property type="term" value="C:microtubule"/>
    <property type="evidence" value="ECO:0007669"/>
    <property type="project" value="UniProtKB-KW"/>
</dbReference>
<dbReference type="GO" id="GO:0005525">
    <property type="term" value="F:GTP binding"/>
    <property type="evidence" value="ECO:0007669"/>
    <property type="project" value="UniProtKB-KW"/>
</dbReference>
<dbReference type="GO" id="GO:0003924">
    <property type="term" value="F:GTPase activity"/>
    <property type="evidence" value="ECO:0007669"/>
    <property type="project" value="InterPro"/>
</dbReference>
<dbReference type="GO" id="GO:0046872">
    <property type="term" value="F:metal ion binding"/>
    <property type="evidence" value="ECO:0007669"/>
    <property type="project" value="UniProtKB-KW"/>
</dbReference>
<dbReference type="GO" id="GO:0005200">
    <property type="term" value="F:structural constituent of cytoskeleton"/>
    <property type="evidence" value="ECO:0007669"/>
    <property type="project" value="InterPro"/>
</dbReference>
<dbReference type="GO" id="GO:0007017">
    <property type="term" value="P:microtubule-based process"/>
    <property type="evidence" value="ECO:0007669"/>
    <property type="project" value="InterPro"/>
</dbReference>
<dbReference type="CDD" id="cd02187">
    <property type="entry name" value="beta_tubulin"/>
    <property type="match status" value="1"/>
</dbReference>
<dbReference type="FunFam" id="1.10.287.600:FF:000003">
    <property type="entry name" value="Tubulin beta chain"/>
    <property type="match status" value="1"/>
</dbReference>
<dbReference type="FunFam" id="3.30.1330.20:FF:000002">
    <property type="entry name" value="Tubulin beta chain"/>
    <property type="match status" value="1"/>
</dbReference>
<dbReference type="FunFam" id="3.40.50.1440:FF:000009">
    <property type="entry name" value="Tubulin beta chain"/>
    <property type="match status" value="1"/>
</dbReference>
<dbReference type="Gene3D" id="1.10.287.600">
    <property type="entry name" value="Helix hairpin bin"/>
    <property type="match status" value="1"/>
</dbReference>
<dbReference type="Gene3D" id="3.30.1330.20">
    <property type="entry name" value="Tubulin/FtsZ, C-terminal domain"/>
    <property type="match status" value="1"/>
</dbReference>
<dbReference type="Gene3D" id="3.40.50.1440">
    <property type="entry name" value="Tubulin/FtsZ, GTPase domain"/>
    <property type="match status" value="1"/>
</dbReference>
<dbReference type="InterPro" id="IPR013838">
    <property type="entry name" value="Beta-tubulin_BS"/>
</dbReference>
<dbReference type="InterPro" id="IPR002453">
    <property type="entry name" value="Beta_tubulin"/>
</dbReference>
<dbReference type="InterPro" id="IPR008280">
    <property type="entry name" value="Tub_FtsZ_C"/>
</dbReference>
<dbReference type="InterPro" id="IPR000217">
    <property type="entry name" value="Tubulin"/>
</dbReference>
<dbReference type="InterPro" id="IPR037103">
    <property type="entry name" value="Tubulin/FtsZ-like_C"/>
</dbReference>
<dbReference type="InterPro" id="IPR018316">
    <property type="entry name" value="Tubulin/FtsZ_2-layer-sand-dom"/>
</dbReference>
<dbReference type="InterPro" id="IPR036525">
    <property type="entry name" value="Tubulin/FtsZ_GTPase_sf"/>
</dbReference>
<dbReference type="InterPro" id="IPR023123">
    <property type="entry name" value="Tubulin_C"/>
</dbReference>
<dbReference type="InterPro" id="IPR017975">
    <property type="entry name" value="Tubulin_CS"/>
</dbReference>
<dbReference type="InterPro" id="IPR003008">
    <property type="entry name" value="Tubulin_FtsZ_GTPase"/>
</dbReference>
<dbReference type="PANTHER" id="PTHR11588">
    <property type="entry name" value="TUBULIN"/>
    <property type="match status" value="1"/>
</dbReference>
<dbReference type="Pfam" id="PF00091">
    <property type="entry name" value="Tubulin"/>
    <property type="match status" value="1"/>
</dbReference>
<dbReference type="Pfam" id="PF03953">
    <property type="entry name" value="Tubulin_C"/>
    <property type="match status" value="1"/>
</dbReference>
<dbReference type="PRINTS" id="PR01163">
    <property type="entry name" value="BETATUBULIN"/>
</dbReference>
<dbReference type="PRINTS" id="PR01161">
    <property type="entry name" value="TUBULIN"/>
</dbReference>
<dbReference type="SMART" id="SM00864">
    <property type="entry name" value="Tubulin"/>
    <property type="match status" value="1"/>
</dbReference>
<dbReference type="SMART" id="SM00865">
    <property type="entry name" value="Tubulin_C"/>
    <property type="match status" value="1"/>
</dbReference>
<dbReference type="SUPFAM" id="SSF55307">
    <property type="entry name" value="Tubulin C-terminal domain-like"/>
    <property type="match status" value="1"/>
</dbReference>
<dbReference type="SUPFAM" id="SSF52490">
    <property type="entry name" value="Tubulin nucleotide-binding domain-like"/>
    <property type="match status" value="1"/>
</dbReference>
<dbReference type="PROSITE" id="PS00227">
    <property type="entry name" value="TUBULIN"/>
    <property type="match status" value="1"/>
</dbReference>
<dbReference type="PROSITE" id="PS00228">
    <property type="entry name" value="TUBULIN_B_AUTOREG"/>
    <property type="match status" value="1"/>
</dbReference>
<reference key="1">
    <citation type="journal article" date="2003" name="J. Appl. Microbiol.">
        <title>Homologous expression of a mutated beta-tubulin gene does not confer benomyl resistance on Trichoderma virens.</title>
        <authorList>
            <person name="Mukherjee M."/>
            <person name="Hadar R."/>
            <person name="Mukherjee P.K."/>
            <person name="Horwitz B.A."/>
        </authorList>
    </citation>
    <scope>NUCLEOTIDE SEQUENCE [MRNA]</scope>
</reference>
<name>TBB2_HYPVI</name>
<accession>Q875L2</accession>
<feature type="chain" id="PRO_0000048435" description="Tubulin beta-2 chain">
    <location>
        <begin position="1"/>
        <end position="446"/>
    </location>
</feature>
<feature type="region of interest" description="Disordered" evidence="3">
    <location>
        <begin position="426"/>
        <end position="446"/>
    </location>
</feature>
<feature type="compositionally biased region" description="Acidic residues" evidence="3">
    <location>
        <begin position="429"/>
        <end position="440"/>
    </location>
</feature>
<feature type="binding site" evidence="2">
    <location>
        <position position="11"/>
    </location>
    <ligand>
        <name>GTP</name>
        <dbReference type="ChEBI" id="CHEBI:37565"/>
    </ligand>
</feature>
<feature type="binding site" evidence="1">
    <location>
        <position position="69"/>
    </location>
    <ligand>
        <name>GTP</name>
        <dbReference type="ChEBI" id="CHEBI:37565"/>
    </ligand>
</feature>
<feature type="binding site" evidence="1">
    <location>
        <position position="69"/>
    </location>
    <ligand>
        <name>Mg(2+)</name>
        <dbReference type="ChEBI" id="CHEBI:18420"/>
    </ligand>
</feature>
<feature type="binding site" evidence="2">
    <location>
        <position position="138"/>
    </location>
    <ligand>
        <name>GTP</name>
        <dbReference type="ChEBI" id="CHEBI:37565"/>
    </ligand>
</feature>
<feature type="binding site" evidence="2">
    <location>
        <position position="142"/>
    </location>
    <ligand>
        <name>GTP</name>
        <dbReference type="ChEBI" id="CHEBI:37565"/>
    </ligand>
</feature>
<feature type="binding site" evidence="2">
    <location>
        <position position="143"/>
    </location>
    <ligand>
        <name>GTP</name>
        <dbReference type="ChEBI" id="CHEBI:37565"/>
    </ligand>
</feature>
<feature type="binding site" evidence="2">
    <location>
        <position position="144"/>
    </location>
    <ligand>
        <name>GTP</name>
        <dbReference type="ChEBI" id="CHEBI:37565"/>
    </ligand>
</feature>
<feature type="binding site" evidence="2">
    <location>
        <position position="204"/>
    </location>
    <ligand>
        <name>GTP</name>
        <dbReference type="ChEBI" id="CHEBI:37565"/>
    </ligand>
</feature>
<feature type="binding site" evidence="2">
    <location>
        <position position="226"/>
    </location>
    <ligand>
        <name>GTP</name>
        <dbReference type="ChEBI" id="CHEBI:37565"/>
    </ligand>
</feature>
<keyword id="KW-0963">Cytoplasm</keyword>
<keyword id="KW-0206">Cytoskeleton</keyword>
<keyword id="KW-0342">GTP-binding</keyword>
<keyword id="KW-0460">Magnesium</keyword>
<keyword id="KW-0479">Metal-binding</keyword>
<keyword id="KW-0493">Microtubule</keyword>
<keyword id="KW-0547">Nucleotide-binding</keyword>
<organism>
    <name type="scientific">Hypocrea virens</name>
    <name type="common">Gliocladium virens</name>
    <name type="synonym">Trichoderma virens</name>
    <dbReference type="NCBI Taxonomy" id="29875"/>
    <lineage>
        <taxon>Eukaryota</taxon>
        <taxon>Fungi</taxon>
        <taxon>Dikarya</taxon>
        <taxon>Ascomycota</taxon>
        <taxon>Pezizomycotina</taxon>
        <taxon>Sordariomycetes</taxon>
        <taxon>Hypocreomycetidae</taxon>
        <taxon>Hypocreales</taxon>
        <taxon>Hypocreaceae</taxon>
        <taxon>Trichoderma</taxon>
    </lineage>
</organism>
<sequence>MREIVHIQTGQCGNQIGAAFWQTISGEHGLDSNGIYGGSSELQLERMNVYFNEANNNKYVPRAVLVDLEPGTMDAVRAGPFGQLFRPDNFIFGQSSAGNNWAKGHYTEGAELVDNVLDVIRREAEGCDCLQGFQITHSLGGGTGSGMGTLLISKIREEFPDRMMATFSVVPSPKVSDTVVEPYNATLSVHQLVENSDETFCIDNEALYDICMRTLKLSNPAYGDLNYLVSAVMSGITTCLRFPGQLNSDLRKLAVNMVPFPRLHFFMVGFAPLTSPGAHSFRAVTVPELTQQMFDPKNMMAASDFRNGRYLTCCSIFRGKVAMKEVEDQMRNVQNKNSTYFVEWIPNNIQTALCAIPPRGLKMSSTFIGNSTSIQELFKRVGEQFSAMFRRKAFLHWYTGEGMDEMEFTEAESNMNDLVSEYQQYQEAGIDEEEEYEEEAPAEHEE</sequence>
<protein>
    <recommendedName>
        <fullName>Tubulin beta-2 chain</fullName>
    </recommendedName>
    <alternativeName>
        <fullName>Beta-2-tubulin</fullName>
    </alternativeName>
</protein>
<proteinExistence type="evidence at transcript level"/>
<comment type="function">
    <text>Tubulin is the major constituent of microtubules, a cylinder consisting of laterally associated linear protofilaments composed of alpha- and beta-tubulin heterodimers. Microtubules grow by the addition of GTP-tubulin dimers to the microtubule end, where a stabilizing cap forms. Below the cap, tubulin dimers are in GDP-bound state, owing to GTPase activity of alpha-tubulin.</text>
</comment>
<comment type="cofactor">
    <cofactor evidence="1">
        <name>Mg(2+)</name>
        <dbReference type="ChEBI" id="CHEBI:18420"/>
    </cofactor>
</comment>
<comment type="subunit">
    <text>Dimer of alpha and beta chains. A typical microtubule is a hollow water-filled tube with an outer diameter of 25 nm and an inner diameter of 15 nM. Alpha-beta heterodimers associate head-to-tail to form protofilaments running lengthwise along the microtubule wall with the beta-tubulin subunit facing the microtubule plus end conferring a structural polarity. Microtubules usually have 13 protofilaments but different protofilament numbers can be found in some organisms and specialized cells.</text>
</comment>
<comment type="subcellular location">
    <subcellularLocation>
        <location>Cytoplasm</location>
        <location>Cytoskeleton</location>
    </subcellularLocation>
</comment>
<comment type="similarity">
    <text evidence="4">Belongs to the tubulin family.</text>
</comment>
<evidence type="ECO:0000250" key="1">
    <source>
        <dbReference type="UniProtKB" id="P68363"/>
    </source>
</evidence>
<evidence type="ECO:0000250" key="2">
    <source>
        <dbReference type="UniProtKB" id="Q13509"/>
    </source>
</evidence>
<evidence type="ECO:0000256" key="3">
    <source>
        <dbReference type="SAM" id="MobiDB-lite"/>
    </source>
</evidence>
<evidence type="ECO:0000305" key="4"/>